<sequence>MKYLKILIIVTIFFFLLINVINCIDRKEIVQKEVKIKFKNLKSTLIKKYSESNMEKIQKHLKHILVERVADTPNHKKVREYIISQFDQLYWDIELDSFKDNTPFGEKTFTNIIVTSKFVNDDDEDDIDTKESNGNISSEPPKTLVLSAHYDSKYFKEFKFFGATDSAVPCSMLIDLAISLQSEIKKSKKKLMIIFFDGEEAFKEWSDTDSLYGSRHLANLLLDKKVITKDNEDLPISSSFYNTVEAFILLDLLGTPNPRFYMFNKKTESLFKKLSDIEDKLSLKRFISPKANKYFQNHFIGSDIQDDHIPFLNYVPTLHIIPYPFPNVWHTEKDDESCLDKNTIEDLSKIFKIFVGSYLI</sequence>
<dbReference type="EC" id="2.3.2.5"/>
<dbReference type="EMBL" id="AAFI02000224">
    <property type="protein sequence ID" value="EAL60492.1"/>
    <property type="molecule type" value="Genomic_DNA"/>
</dbReference>
<dbReference type="RefSeq" id="XP_628902.1">
    <property type="nucleotide sequence ID" value="XM_628900.1"/>
</dbReference>
<dbReference type="SMR" id="Q54B14"/>
<dbReference type="FunCoup" id="Q54B14">
    <property type="interactions" value="49"/>
</dbReference>
<dbReference type="STRING" id="44689.Q54B14"/>
<dbReference type="GlyCosmos" id="Q54B14">
    <property type="glycosylation" value="1 site, No reported glycans"/>
</dbReference>
<dbReference type="GlyGen" id="Q54B14">
    <property type="glycosylation" value="1 site"/>
</dbReference>
<dbReference type="PaxDb" id="44689-DDB0266352"/>
<dbReference type="EnsemblProtists" id="EAL60492">
    <property type="protein sequence ID" value="EAL60492"/>
    <property type="gene ID" value="DDB_G0293986"/>
</dbReference>
<dbReference type="GeneID" id="8629518"/>
<dbReference type="KEGG" id="ddi:DDB_G0293986"/>
<dbReference type="dictyBase" id="DDB_G0293986">
    <property type="gene designation" value="qpct"/>
</dbReference>
<dbReference type="VEuPathDB" id="AmoebaDB:DDB_G0293986"/>
<dbReference type="eggNOG" id="KOG3946">
    <property type="taxonomic scope" value="Eukaryota"/>
</dbReference>
<dbReference type="HOGENOM" id="CLU_045003_1_0_1"/>
<dbReference type="InParanoid" id="Q54B14"/>
<dbReference type="OMA" id="THWAYQK"/>
<dbReference type="PhylomeDB" id="Q54B14"/>
<dbReference type="Reactome" id="R-DDI-6798695">
    <property type="pathway name" value="Neutrophil degranulation"/>
</dbReference>
<dbReference type="PRO" id="PR:Q54B14"/>
<dbReference type="Proteomes" id="UP000002195">
    <property type="component" value="Chromosome 6"/>
</dbReference>
<dbReference type="GO" id="GO:0005576">
    <property type="term" value="C:extracellular region"/>
    <property type="evidence" value="ECO:0007669"/>
    <property type="project" value="UniProtKB-SubCell"/>
</dbReference>
<dbReference type="GO" id="GO:0016603">
    <property type="term" value="F:glutaminyl-peptide cyclotransferase activity"/>
    <property type="evidence" value="ECO:0000250"/>
    <property type="project" value="UniProtKB"/>
</dbReference>
<dbReference type="GO" id="GO:0008270">
    <property type="term" value="F:zinc ion binding"/>
    <property type="evidence" value="ECO:0000250"/>
    <property type="project" value="UniProtKB"/>
</dbReference>
<dbReference type="GO" id="GO:0017186">
    <property type="term" value="P:peptidyl-pyroglutamic acid biosynthetic process, using glutaminyl-peptide cyclotransferase"/>
    <property type="evidence" value="ECO:0000250"/>
    <property type="project" value="UniProtKB"/>
</dbReference>
<dbReference type="CDD" id="cd03880">
    <property type="entry name" value="M28_QC_like"/>
    <property type="match status" value="1"/>
</dbReference>
<dbReference type="FunFam" id="3.40.630.10:FF:000196">
    <property type="entry name" value="glutaminyl-peptide cyclotransferase isoform X1"/>
    <property type="match status" value="1"/>
</dbReference>
<dbReference type="Gene3D" id="3.40.630.10">
    <property type="entry name" value="Zn peptidases"/>
    <property type="match status" value="1"/>
</dbReference>
<dbReference type="InterPro" id="IPR037457">
    <property type="entry name" value="M28_QC"/>
</dbReference>
<dbReference type="InterPro" id="IPR007484">
    <property type="entry name" value="Peptidase_M28"/>
</dbReference>
<dbReference type="InterPro" id="IPR040234">
    <property type="entry name" value="QC/QCL"/>
</dbReference>
<dbReference type="PANTHER" id="PTHR12283">
    <property type="entry name" value="GLUTAMINYL-PEPTIDE CYCLOTRANSFERASE"/>
    <property type="match status" value="1"/>
</dbReference>
<dbReference type="PANTHER" id="PTHR12283:SF6">
    <property type="entry name" value="GLUTAMINYL-PEPTIDE CYCLOTRANSFERASE-RELATED"/>
    <property type="match status" value="1"/>
</dbReference>
<dbReference type="Pfam" id="PF04389">
    <property type="entry name" value="Peptidase_M28"/>
    <property type="match status" value="1"/>
</dbReference>
<dbReference type="SUPFAM" id="SSF53187">
    <property type="entry name" value="Zn-dependent exopeptidases"/>
    <property type="match status" value="1"/>
</dbReference>
<proteinExistence type="inferred from homology"/>
<protein>
    <recommendedName>
        <fullName>Glutaminyl-peptide cyclotransferase</fullName>
        <ecNumber>2.3.2.5</ecNumber>
    </recommendedName>
    <alternativeName>
        <fullName>Glutaminyl cyclase</fullName>
        <shortName>QC</shortName>
    </alternativeName>
    <alternativeName>
        <fullName>Glutaminyl-tRNA cyclotransferase</fullName>
    </alternativeName>
</protein>
<keyword id="KW-0012">Acyltransferase</keyword>
<keyword id="KW-0325">Glycoprotein</keyword>
<keyword id="KW-0479">Metal-binding</keyword>
<keyword id="KW-1185">Reference proteome</keyword>
<keyword id="KW-0964">Secreted</keyword>
<keyword id="KW-0732">Signal</keyword>
<keyword id="KW-0808">Transferase</keyword>
<keyword id="KW-0862">Zinc</keyword>
<evidence type="ECO:0000250" key="1"/>
<evidence type="ECO:0000250" key="2">
    <source>
        <dbReference type="UniProtKB" id="B7QK46"/>
    </source>
</evidence>
<evidence type="ECO:0000250" key="3">
    <source>
        <dbReference type="UniProtKB" id="Q16769"/>
    </source>
</evidence>
<evidence type="ECO:0000255" key="4"/>
<evidence type="ECO:0000305" key="5"/>
<gene>
    <name type="primary">qpct</name>
    <name type="ORF">DDB_G0293986</name>
</gene>
<accession>Q54B14</accession>
<name>QPCT_DICDI</name>
<organism>
    <name type="scientific">Dictyostelium discoideum</name>
    <name type="common">Social amoeba</name>
    <dbReference type="NCBI Taxonomy" id="44689"/>
    <lineage>
        <taxon>Eukaryota</taxon>
        <taxon>Amoebozoa</taxon>
        <taxon>Evosea</taxon>
        <taxon>Eumycetozoa</taxon>
        <taxon>Dictyostelia</taxon>
        <taxon>Dictyosteliales</taxon>
        <taxon>Dictyosteliaceae</taxon>
        <taxon>Dictyostelium</taxon>
    </lineage>
</organism>
<comment type="function">
    <text evidence="1">Responsible for the biosynthesis of pyroglutamyl peptides. Has a bias against acidic and tryptophan residues adjacent to the N-terminal glutaminyl residue and a lack of importance of chain length after the second residue. Also catalyzes N-terminal pyroglutamate formation (By similarity).</text>
</comment>
<comment type="catalytic activity">
    <reaction>
        <text>N-terminal L-glutaminyl-[peptide] = N-terminal 5-oxo-L-prolyl-[peptide] + NH4(+)</text>
        <dbReference type="Rhea" id="RHEA:23652"/>
        <dbReference type="Rhea" id="RHEA-COMP:11736"/>
        <dbReference type="Rhea" id="RHEA-COMP:11846"/>
        <dbReference type="ChEBI" id="CHEBI:28938"/>
        <dbReference type="ChEBI" id="CHEBI:64722"/>
        <dbReference type="ChEBI" id="CHEBI:87215"/>
        <dbReference type="EC" id="2.3.2.5"/>
    </reaction>
</comment>
<comment type="subcellular location">
    <subcellularLocation>
        <location evidence="1">Secreted</location>
    </subcellularLocation>
</comment>
<comment type="similarity">
    <text evidence="5">Belongs to the glutaminyl-peptide cyclotransferase family.</text>
</comment>
<comment type="caution">
    <text evidence="2 3">It is unclear whether this protein requires a metal cofactor for catalysis. It was originally proposed to be a Zn(2+)-dependent metalloenzyme based on structural similarities to bacterial aminopeptidases and the observation that it can bind Zn(2+) ions, typically in a 1:1 stoichiometry (By similarity). However, a recent study suggests a Zn(2+)-independent catalytic mechanism (By similarity).</text>
</comment>
<reference key="1">
    <citation type="journal article" date="2005" name="Nature">
        <title>The genome of the social amoeba Dictyostelium discoideum.</title>
        <authorList>
            <person name="Eichinger L."/>
            <person name="Pachebat J.A."/>
            <person name="Gloeckner G."/>
            <person name="Rajandream M.A."/>
            <person name="Sucgang R."/>
            <person name="Berriman M."/>
            <person name="Song J."/>
            <person name="Olsen R."/>
            <person name="Szafranski K."/>
            <person name="Xu Q."/>
            <person name="Tunggal B."/>
            <person name="Kummerfeld S."/>
            <person name="Madera M."/>
            <person name="Konfortov B.A."/>
            <person name="Rivero F."/>
            <person name="Bankier A.T."/>
            <person name="Lehmann R."/>
            <person name="Hamlin N."/>
            <person name="Davies R."/>
            <person name="Gaudet P."/>
            <person name="Fey P."/>
            <person name="Pilcher K."/>
            <person name="Chen G."/>
            <person name="Saunders D."/>
            <person name="Sodergren E.J."/>
            <person name="Davis P."/>
            <person name="Kerhornou A."/>
            <person name="Nie X."/>
            <person name="Hall N."/>
            <person name="Anjard C."/>
            <person name="Hemphill L."/>
            <person name="Bason N."/>
            <person name="Farbrother P."/>
            <person name="Desany B."/>
            <person name="Just E."/>
            <person name="Morio T."/>
            <person name="Rost R."/>
            <person name="Churcher C.M."/>
            <person name="Cooper J."/>
            <person name="Haydock S."/>
            <person name="van Driessche N."/>
            <person name="Cronin A."/>
            <person name="Goodhead I."/>
            <person name="Muzny D.M."/>
            <person name="Mourier T."/>
            <person name="Pain A."/>
            <person name="Lu M."/>
            <person name="Harper D."/>
            <person name="Lindsay R."/>
            <person name="Hauser H."/>
            <person name="James K.D."/>
            <person name="Quiles M."/>
            <person name="Madan Babu M."/>
            <person name="Saito T."/>
            <person name="Buchrieser C."/>
            <person name="Wardroper A."/>
            <person name="Felder M."/>
            <person name="Thangavelu M."/>
            <person name="Johnson D."/>
            <person name="Knights A."/>
            <person name="Loulseged H."/>
            <person name="Mungall K.L."/>
            <person name="Oliver K."/>
            <person name="Price C."/>
            <person name="Quail M.A."/>
            <person name="Urushihara H."/>
            <person name="Hernandez J."/>
            <person name="Rabbinowitsch E."/>
            <person name="Steffen D."/>
            <person name="Sanders M."/>
            <person name="Ma J."/>
            <person name="Kohara Y."/>
            <person name="Sharp S."/>
            <person name="Simmonds M.N."/>
            <person name="Spiegler S."/>
            <person name="Tivey A."/>
            <person name="Sugano S."/>
            <person name="White B."/>
            <person name="Walker D."/>
            <person name="Woodward J.R."/>
            <person name="Winckler T."/>
            <person name="Tanaka Y."/>
            <person name="Shaulsky G."/>
            <person name="Schleicher M."/>
            <person name="Weinstock G.M."/>
            <person name="Rosenthal A."/>
            <person name="Cox E.C."/>
            <person name="Chisholm R.L."/>
            <person name="Gibbs R.A."/>
            <person name="Loomis W.F."/>
            <person name="Platzer M."/>
            <person name="Kay R.R."/>
            <person name="Williams J.G."/>
            <person name="Dear P.H."/>
            <person name="Noegel A.A."/>
            <person name="Barrell B.G."/>
            <person name="Kuspa A."/>
        </authorList>
    </citation>
    <scope>NUCLEOTIDE SEQUENCE [LARGE SCALE GENOMIC DNA]</scope>
    <source>
        <strain>AX4</strain>
    </source>
</reference>
<feature type="signal peptide" evidence="4">
    <location>
        <begin position="1"/>
        <end position="23"/>
    </location>
</feature>
<feature type="chain" id="PRO_0000327730" description="Glutaminyl-peptide cyclotransferase">
    <location>
        <begin position="24"/>
        <end position="360"/>
    </location>
</feature>
<feature type="active site" description="Proton acceptor" evidence="3">
    <location>
        <position position="199"/>
    </location>
</feature>
<feature type="active site" description="Proton acceptor" evidence="3">
    <location>
        <position position="251"/>
    </location>
</feature>
<feature type="binding site" evidence="3">
    <location>
        <position position="165"/>
    </location>
    <ligand>
        <name>Zn(2+)</name>
        <dbReference type="ChEBI" id="CHEBI:29105"/>
    </ligand>
</feature>
<feature type="binding site" evidence="3">
    <location>
        <position position="200"/>
    </location>
    <ligand>
        <name>Zn(2+)</name>
        <dbReference type="ChEBI" id="CHEBI:29105"/>
    </ligand>
</feature>
<feature type="binding site" evidence="3">
    <location>
        <position position="330"/>
    </location>
    <ligand>
        <name>Zn(2+)</name>
        <dbReference type="ChEBI" id="CHEBI:29105"/>
    </ligand>
</feature>
<feature type="glycosylation site" description="N-linked (GlcNAc...) asparagine" evidence="4">
    <location>
        <position position="135"/>
    </location>
</feature>